<proteinExistence type="inferred from homology"/>
<feature type="chain" id="PRO_1000001081" description="Dihydroxy-acid dehydratase">
    <location>
        <begin position="1"/>
        <end position="561"/>
    </location>
</feature>
<feature type="active site" description="Proton acceptor" evidence="1">
    <location>
        <position position="473"/>
    </location>
</feature>
<feature type="binding site" evidence="1">
    <location>
        <position position="50"/>
    </location>
    <ligand>
        <name>[2Fe-2S] cluster</name>
        <dbReference type="ChEBI" id="CHEBI:190135"/>
    </ligand>
</feature>
<feature type="binding site" evidence="1">
    <location>
        <position position="82"/>
    </location>
    <ligand>
        <name>Mg(2+)</name>
        <dbReference type="ChEBI" id="CHEBI:18420"/>
    </ligand>
</feature>
<feature type="binding site" evidence="1">
    <location>
        <position position="123"/>
    </location>
    <ligand>
        <name>[2Fe-2S] cluster</name>
        <dbReference type="ChEBI" id="CHEBI:190135"/>
    </ligand>
</feature>
<feature type="binding site" evidence="1">
    <location>
        <position position="124"/>
    </location>
    <ligand>
        <name>Mg(2+)</name>
        <dbReference type="ChEBI" id="CHEBI:18420"/>
    </ligand>
</feature>
<feature type="binding site" description="via carbamate group" evidence="1">
    <location>
        <position position="125"/>
    </location>
    <ligand>
        <name>Mg(2+)</name>
        <dbReference type="ChEBI" id="CHEBI:18420"/>
    </ligand>
</feature>
<feature type="binding site" evidence="1">
    <location>
        <position position="195"/>
    </location>
    <ligand>
        <name>[2Fe-2S] cluster</name>
        <dbReference type="ChEBI" id="CHEBI:190135"/>
    </ligand>
</feature>
<feature type="binding site" evidence="1">
    <location>
        <position position="447"/>
    </location>
    <ligand>
        <name>Mg(2+)</name>
        <dbReference type="ChEBI" id="CHEBI:18420"/>
    </ligand>
</feature>
<feature type="modified residue" description="N6-carboxylysine" evidence="1">
    <location>
        <position position="125"/>
    </location>
</feature>
<gene>
    <name evidence="1" type="primary">ilvD</name>
    <name type="ordered locus">Tery_0019</name>
</gene>
<name>ILVD_TRIEI</name>
<keyword id="KW-0001">2Fe-2S</keyword>
<keyword id="KW-0028">Amino-acid biosynthesis</keyword>
<keyword id="KW-0100">Branched-chain amino acid biosynthesis</keyword>
<keyword id="KW-0408">Iron</keyword>
<keyword id="KW-0411">Iron-sulfur</keyword>
<keyword id="KW-0456">Lyase</keyword>
<keyword id="KW-0460">Magnesium</keyword>
<keyword id="KW-0479">Metal-binding</keyword>
<reference key="1">
    <citation type="journal article" date="2015" name="Proc. Natl. Acad. Sci. U.S.A.">
        <title>Trichodesmium genome maintains abundant, widespread noncoding DNA in situ, despite oligotrophic lifestyle.</title>
        <authorList>
            <person name="Walworth N."/>
            <person name="Pfreundt U."/>
            <person name="Nelson W.C."/>
            <person name="Mincer T."/>
            <person name="Heidelberg J.F."/>
            <person name="Fu F."/>
            <person name="Waterbury J.B."/>
            <person name="Glavina del Rio T."/>
            <person name="Goodwin L."/>
            <person name="Kyrpides N.C."/>
            <person name="Land M.L."/>
            <person name="Woyke T."/>
            <person name="Hutchins D.A."/>
            <person name="Hess W.R."/>
            <person name="Webb E.A."/>
        </authorList>
    </citation>
    <scope>NUCLEOTIDE SEQUENCE [LARGE SCALE GENOMIC DNA]</scope>
    <source>
        <strain>IMS101</strain>
    </source>
</reference>
<dbReference type="EC" id="4.2.1.9" evidence="1"/>
<dbReference type="EMBL" id="CP000393">
    <property type="protein sequence ID" value="ABG49543.1"/>
    <property type="molecule type" value="Genomic_DNA"/>
</dbReference>
<dbReference type="RefSeq" id="WP_011609947.1">
    <property type="nucleotide sequence ID" value="NC_008312.1"/>
</dbReference>
<dbReference type="SMR" id="Q11AD1"/>
<dbReference type="STRING" id="203124.Tery_0019"/>
<dbReference type="KEGG" id="ter:Tery_0019"/>
<dbReference type="eggNOG" id="COG0129">
    <property type="taxonomic scope" value="Bacteria"/>
</dbReference>
<dbReference type="HOGENOM" id="CLU_014271_4_2_3"/>
<dbReference type="OrthoDB" id="9807077at2"/>
<dbReference type="UniPathway" id="UPA00047">
    <property type="reaction ID" value="UER00057"/>
</dbReference>
<dbReference type="UniPathway" id="UPA00049">
    <property type="reaction ID" value="UER00061"/>
</dbReference>
<dbReference type="GO" id="GO:0051537">
    <property type="term" value="F:2 iron, 2 sulfur cluster binding"/>
    <property type="evidence" value="ECO:0007669"/>
    <property type="project" value="UniProtKB-UniRule"/>
</dbReference>
<dbReference type="GO" id="GO:0004160">
    <property type="term" value="F:dihydroxy-acid dehydratase activity"/>
    <property type="evidence" value="ECO:0007669"/>
    <property type="project" value="UniProtKB-UniRule"/>
</dbReference>
<dbReference type="GO" id="GO:0000287">
    <property type="term" value="F:magnesium ion binding"/>
    <property type="evidence" value="ECO:0007669"/>
    <property type="project" value="UniProtKB-UniRule"/>
</dbReference>
<dbReference type="GO" id="GO:0009097">
    <property type="term" value="P:isoleucine biosynthetic process"/>
    <property type="evidence" value="ECO:0007669"/>
    <property type="project" value="UniProtKB-UniRule"/>
</dbReference>
<dbReference type="GO" id="GO:0009099">
    <property type="term" value="P:L-valine biosynthetic process"/>
    <property type="evidence" value="ECO:0007669"/>
    <property type="project" value="UniProtKB-UniRule"/>
</dbReference>
<dbReference type="FunFam" id="3.50.30.80:FF:000001">
    <property type="entry name" value="Dihydroxy-acid dehydratase"/>
    <property type="match status" value="1"/>
</dbReference>
<dbReference type="Gene3D" id="3.50.30.80">
    <property type="entry name" value="IlvD/EDD C-terminal domain-like"/>
    <property type="match status" value="1"/>
</dbReference>
<dbReference type="HAMAP" id="MF_00012">
    <property type="entry name" value="IlvD"/>
    <property type="match status" value="1"/>
</dbReference>
<dbReference type="InterPro" id="IPR050165">
    <property type="entry name" value="DHAD_IlvD/Edd"/>
</dbReference>
<dbReference type="InterPro" id="IPR042096">
    <property type="entry name" value="Dihydro-acid_dehy_C"/>
</dbReference>
<dbReference type="InterPro" id="IPR004404">
    <property type="entry name" value="DihydroxyA_deHydtase"/>
</dbReference>
<dbReference type="InterPro" id="IPR020558">
    <property type="entry name" value="DiOHA_6PGluconate_deHydtase_CS"/>
</dbReference>
<dbReference type="InterPro" id="IPR056740">
    <property type="entry name" value="ILV_EDD_C"/>
</dbReference>
<dbReference type="InterPro" id="IPR000581">
    <property type="entry name" value="ILV_EDD_N"/>
</dbReference>
<dbReference type="InterPro" id="IPR037237">
    <property type="entry name" value="IlvD/EDD_N"/>
</dbReference>
<dbReference type="NCBIfam" id="TIGR00110">
    <property type="entry name" value="ilvD"/>
    <property type="match status" value="1"/>
</dbReference>
<dbReference type="NCBIfam" id="NF002068">
    <property type="entry name" value="PRK00911.1"/>
    <property type="match status" value="1"/>
</dbReference>
<dbReference type="PANTHER" id="PTHR21000">
    <property type="entry name" value="DIHYDROXY-ACID DEHYDRATASE DAD"/>
    <property type="match status" value="1"/>
</dbReference>
<dbReference type="PANTHER" id="PTHR21000:SF5">
    <property type="entry name" value="DIHYDROXY-ACID DEHYDRATASE, MITOCHONDRIAL"/>
    <property type="match status" value="1"/>
</dbReference>
<dbReference type="Pfam" id="PF24877">
    <property type="entry name" value="ILV_EDD_C"/>
    <property type="match status" value="1"/>
</dbReference>
<dbReference type="Pfam" id="PF00920">
    <property type="entry name" value="ILVD_EDD_N"/>
    <property type="match status" value="1"/>
</dbReference>
<dbReference type="SUPFAM" id="SSF143975">
    <property type="entry name" value="IlvD/EDD N-terminal domain-like"/>
    <property type="match status" value="1"/>
</dbReference>
<dbReference type="SUPFAM" id="SSF52016">
    <property type="entry name" value="LeuD/IlvD-like"/>
    <property type="match status" value="1"/>
</dbReference>
<dbReference type="PROSITE" id="PS00886">
    <property type="entry name" value="ILVD_EDD_1"/>
    <property type="match status" value="1"/>
</dbReference>
<dbReference type="PROSITE" id="PS00887">
    <property type="entry name" value="ILVD_EDD_2"/>
    <property type="match status" value="1"/>
</dbReference>
<protein>
    <recommendedName>
        <fullName evidence="1">Dihydroxy-acid dehydratase</fullName>
        <shortName evidence="1">DAD</shortName>
        <ecNumber evidence="1">4.2.1.9</ecNumber>
    </recommendedName>
</protein>
<comment type="function">
    <text evidence="1">Functions in the biosynthesis of branched-chain amino acids. Catalyzes the dehydration of (2R,3R)-2,3-dihydroxy-3-methylpentanoate (2,3-dihydroxy-3-methylvalerate) into 2-oxo-3-methylpentanoate (2-oxo-3-methylvalerate) and of (2R)-2,3-dihydroxy-3-methylbutanoate (2,3-dihydroxyisovalerate) into 2-oxo-3-methylbutanoate (2-oxoisovalerate), the penultimate precursor to L-isoleucine and L-valine, respectively.</text>
</comment>
<comment type="catalytic activity">
    <reaction evidence="1">
        <text>(2R)-2,3-dihydroxy-3-methylbutanoate = 3-methyl-2-oxobutanoate + H2O</text>
        <dbReference type="Rhea" id="RHEA:24809"/>
        <dbReference type="ChEBI" id="CHEBI:11851"/>
        <dbReference type="ChEBI" id="CHEBI:15377"/>
        <dbReference type="ChEBI" id="CHEBI:49072"/>
        <dbReference type="EC" id="4.2.1.9"/>
    </reaction>
    <physiologicalReaction direction="left-to-right" evidence="1">
        <dbReference type="Rhea" id="RHEA:24810"/>
    </physiologicalReaction>
</comment>
<comment type="catalytic activity">
    <reaction evidence="1">
        <text>(2R,3R)-2,3-dihydroxy-3-methylpentanoate = (S)-3-methyl-2-oxopentanoate + H2O</text>
        <dbReference type="Rhea" id="RHEA:27694"/>
        <dbReference type="ChEBI" id="CHEBI:15377"/>
        <dbReference type="ChEBI" id="CHEBI:35146"/>
        <dbReference type="ChEBI" id="CHEBI:49258"/>
        <dbReference type="EC" id="4.2.1.9"/>
    </reaction>
    <physiologicalReaction direction="left-to-right" evidence="1">
        <dbReference type="Rhea" id="RHEA:27695"/>
    </physiologicalReaction>
</comment>
<comment type="cofactor">
    <cofactor evidence="1">
        <name>[2Fe-2S] cluster</name>
        <dbReference type="ChEBI" id="CHEBI:190135"/>
    </cofactor>
    <text evidence="1">Binds 1 [2Fe-2S] cluster per subunit. This cluster acts as a Lewis acid cofactor.</text>
</comment>
<comment type="cofactor">
    <cofactor evidence="1">
        <name>Mg(2+)</name>
        <dbReference type="ChEBI" id="CHEBI:18420"/>
    </cofactor>
</comment>
<comment type="pathway">
    <text evidence="1">Amino-acid biosynthesis; L-isoleucine biosynthesis; L-isoleucine from 2-oxobutanoate: step 3/4.</text>
</comment>
<comment type="pathway">
    <text evidence="1">Amino-acid biosynthesis; L-valine biosynthesis; L-valine from pyruvate: step 3/4.</text>
</comment>
<comment type="subunit">
    <text evidence="1">Homodimer.</text>
</comment>
<comment type="similarity">
    <text evidence="1">Belongs to the IlvD/Edd family.</text>
</comment>
<evidence type="ECO:0000255" key="1">
    <source>
        <dbReference type="HAMAP-Rule" id="MF_00012"/>
    </source>
</evidence>
<accession>Q11AD1</accession>
<organism>
    <name type="scientific">Trichodesmium erythraeum (strain IMS101)</name>
    <dbReference type="NCBI Taxonomy" id="203124"/>
    <lineage>
        <taxon>Bacteria</taxon>
        <taxon>Bacillati</taxon>
        <taxon>Cyanobacteriota</taxon>
        <taxon>Cyanophyceae</taxon>
        <taxon>Oscillatoriophycideae</taxon>
        <taxon>Oscillatoriales</taxon>
        <taxon>Microcoleaceae</taxon>
        <taxon>Trichodesmium</taxon>
    </lineage>
</organism>
<sequence length="561" mass="59125">MPENLRSQLVTKGVQRAPNRAMLRAVGFEDSDFTKPIIGVANAHSTITPCNMGINDLAMRAVSGVKEAGGMPQIFGTITISDGISMGTEGMKYSLVSRDVIADSIETVCNGQTMDGVLAIGGCDKNMPGAMIAIARMNIPAIFVYGGTIKPGNYNGKDLTVVSAFEAVGEYSAGKIDETELTEVERRACPGAGSCGGMFTANTMSSAFEAMGMSLMYSSTMAAEDAEKADSTEKSAHVLVEAIRKQILPSQIITRKAIENAISVIMAVGGSTNAVLHLLAIAYAANVKLSLDDFEIIRARVPVLCDLKPSGKYVTTNLHQAGGIPLVMKMLLEHDLLHPDALTITGKTIGEQLTNIPSEPPSNQDVIRPWNNPMYAQGHLAILKGNLATEGAVAKITGVKNPEITGLARVFDSEEACLEAILAGKIQAGNIIVVRYEGPKGGPGMREMLAPTSAIIGAGLGDKVGLITDGRFSGGTYGMVVGHVAPEAAVGGTIALVKEGDMITIDAHKRLLQLNISDEELEKRRQVWKPRKPQYTRGVLAKYAKLVSSSSVGAVTDAGLG</sequence>